<keyword id="KW-0007">Acetylation</keyword>
<keyword id="KW-0963">Cytoplasm</keyword>
<keyword id="KW-1185">Reference proteome</keyword>
<keyword id="KW-0687">Ribonucleoprotein</keyword>
<keyword id="KW-0689">Ribosomal protein</keyword>
<evidence type="ECO:0000255" key="1">
    <source>
        <dbReference type="HAMAP-Rule" id="MF_03122"/>
    </source>
</evidence>
<evidence type="ECO:0000305" key="2"/>
<dbReference type="EMBL" id="CU928168">
    <property type="protein sequence ID" value="CAR22975.1"/>
    <property type="molecule type" value="Genomic_DNA"/>
</dbReference>
<dbReference type="RefSeq" id="XP_002553413.1">
    <property type="nucleotide sequence ID" value="XM_002553367.1"/>
</dbReference>
<dbReference type="SMR" id="C5DFM0"/>
<dbReference type="FunCoup" id="C5DFM0">
    <property type="interactions" value="1493"/>
</dbReference>
<dbReference type="STRING" id="559295.C5DFM0"/>
<dbReference type="GeneID" id="8295660"/>
<dbReference type="KEGG" id="lth:KLTH0D16214g"/>
<dbReference type="eggNOG" id="KOG1628">
    <property type="taxonomic scope" value="Eukaryota"/>
</dbReference>
<dbReference type="HOGENOM" id="CLU_062507_0_0_1"/>
<dbReference type="InParanoid" id="C5DFM0"/>
<dbReference type="OMA" id="TRFKGHE"/>
<dbReference type="OrthoDB" id="9834376at2759"/>
<dbReference type="Proteomes" id="UP000002036">
    <property type="component" value="Chromosome D"/>
</dbReference>
<dbReference type="GO" id="GO:0022627">
    <property type="term" value="C:cytosolic small ribosomal subunit"/>
    <property type="evidence" value="ECO:0007669"/>
    <property type="project" value="UniProtKB-UniRule"/>
</dbReference>
<dbReference type="GO" id="GO:0003735">
    <property type="term" value="F:structural constituent of ribosome"/>
    <property type="evidence" value="ECO:0007669"/>
    <property type="project" value="UniProtKB-UniRule"/>
</dbReference>
<dbReference type="GO" id="GO:0006412">
    <property type="term" value="P:translation"/>
    <property type="evidence" value="ECO:0007669"/>
    <property type="project" value="UniProtKB-UniRule"/>
</dbReference>
<dbReference type="HAMAP" id="MF_03122">
    <property type="entry name" value="Ribosomal_eS1_euk"/>
    <property type="match status" value="1"/>
</dbReference>
<dbReference type="InterPro" id="IPR001593">
    <property type="entry name" value="Ribosomal_eS1"/>
</dbReference>
<dbReference type="InterPro" id="IPR018281">
    <property type="entry name" value="Ribosomal_eS1_CS"/>
</dbReference>
<dbReference type="InterPro" id="IPR027500">
    <property type="entry name" value="Ribosomal_eS1_euk"/>
</dbReference>
<dbReference type="PANTHER" id="PTHR11830">
    <property type="entry name" value="40S RIBOSOMAL PROTEIN S3A"/>
    <property type="match status" value="1"/>
</dbReference>
<dbReference type="Pfam" id="PF01015">
    <property type="entry name" value="Ribosomal_S3Ae"/>
    <property type="match status" value="1"/>
</dbReference>
<dbReference type="SMART" id="SM01397">
    <property type="entry name" value="Ribosomal_S3Ae"/>
    <property type="match status" value="1"/>
</dbReference>
<dbReference type="PROSITE" id="PS01191">
    <property type="entry name" value="RIBOSOMAL_S3AE"/>
    <property type="match status" value="1"/>
</dbReference>
<reference key="1">
    <citation type="journal article" date="2009" name="Genome Res.">
        <title>Comparative genomics of protoploid Saccharomycetaceae.</title>
        <authorList>
            <consortium name="The Genolevures Consortium"/>
            <person name="Souciet J.-L."/>
            <person name="Dujon B."/>
            <person name="Gaillardin C."/>
            <person name="Johnston M."/>
            <person name="Baret P.V."/>
            <person name="Cliften P."/>
            <person name="Sherman D.J."/>
            <person name="Weissenbach J."/>
            <person name="Westhof E."/>
            <person name="Wincker P."/>
            <person name="Jubin C."/>
            <person name="Poulain J."/>
            <person name="Barbe V."/>
            <person name="Segurens B."/>
            <person name="Artiguenave F."/>
            <person name="Anthouard V."/>
            <person name="Vacherie B."/>
            <person name="Val M.-E."/>
            <person name="Fulton R.S."/>
            <person name="Minx P."/>
            <person name="Wilson R."/>
            <person name="Durrens P."/>
            <person name="Jean G."/>
            <person name="Marck C."/>
            <person name="Martin T."/>
            <person name="Nikolski M."/>
            <person name="Rolland T."/>
            <person name="Seret M.-L."/>
            <person name="Casaregola S."/>
            <person name="Despons L."/>
            <person name="Fairhead C."/>
            <person name="Fischer G."/>
            <person name="Lafontaine I."/>
            <person name="Leh V."/>
            <person name="Lemaire M."/>
            <person name="de Montigny J."/>
            <person name="Neuveglise C."/>
            <person name="Thierry A."/>
            <person name="Blanc-Lenfle I."/>
            <person name="Bleykasten C."/>
            <person name="Diffels J."/>
            <person name="Fritsch E."/>
            <person name="Frangeul L."/>
            <person name="Goeffon A."/>
            <person name="Jauniaux N."/>
            <person name="Kachouri-Lafond R."/>
            <person name="Payen C."/>
            <person name="Potier S."/>
            <person name="Pribylova L."/>
            <person name="Ozanne C."/>
            <person name="Richard G.-F."/>
            <person name="Sacerdot C."/>
            <person name="Straub M.-L."/>
            <person name="Talla E."/>
        </authorList>
    </citation>
    <scope>NUCLEOTIDE SEQUENCE [LARGE SCALE GENOMIC DNA]</scope>
    <source>
        <strain>ATCC 56472 / CBS 6340 / NRRL Y-8284</strain>
    </source>
</reference>
<organism>
    <name type="scientific">Lachancea thermotolerans (strain ATCC 56472 / CBS 6340 / NRRL Y-8284)</name>
    <name type="common">Yeast</name>
    <name type="synonym">Kluyveromyces thermotolerans</name>
    <dbReference type="NCBI Taxonomy" id="559295"/>
    <lineage>
        <taxon>Eukaryota</taxon>
        <taxon>Fungi</taxon>
        <taxon>Dikarya</taxon>
        <taxon>Ascomycota</taxon>
        <taxon>Saccharomycotina</taxon>
        <taxon>Saccharomycetes</taxon>
        <taxon>Saccharomycetales</taxon>
        <taxon>Saccharomycetaceae</taxon>
        <taxon>Lachancea</taxon>
    </lineage>
</organism>
<sequence>MAVGKNKRLSKGKKGLKKKVVDPFSRKEWYDIKAPSTFENRNVGKTLVNKSTGLKNASDYLKGRVVEVCLADLQGSEDHSFRKVKLRVDEVQGKNLLTNFHGLDLTTDKYRSMVRKWQTLIEANVTVKTADEYVLRVFAIAFTRRQPNQVKKACYAQSSHIRAIRKVISEILTREVQNSTLAQLTSKLIPEVINKEIENATKDIFPLQNVHIRKVKLLKQPKFDLGALMTLHGEASGEEKGKKVASGFKDEILETV</sequence>
<feature type="initiator methionine" description="Removed" evidence="1">
    <location>
        <position position="1"/>
    </location>
</feature>
<feature type="chain" id="PRO_0000389381" description="Small ribosomal subunit protein eS1">
    <location>
        <begin position="2"/>
        <end position="256"/>
    </location>
</feature>
<feature type="modified residue" description="N-acetylalanine; partial" evidence="1">
    <location>
        <position position="2"/>
    </location>
</feature>
<protein>
    <recommendedName>
        <fullName evidence="1">Small ribosomal subunit protein eS1</fullName>
    </recommendedName>
    <alternativeName>
        <fullName evidence="2">40S ribosomal protein S1</fullName>
    </alternativeName>
</protein>
<comment type="subunit">
    <text evidence="1">Component of the small ribosomal subunit. Mature ribosomes consist of a small (40S) and a large (60S) subunit. The 40S subunit contains about 33 different proteins and 1 molecule of RNA (18S). The 60S subunit contains about 49 different proteins and 3 molecules of RNA (25S, 5.8S and 5S).</text>
</comment>
<comment type="subcellular location">
    <subcellularLocation>
        <location evidence="1">Cytoplasm</location>
    </subcellularLocation>
</comment>
<comment type="similarity">
    <text evidence="1">Belongs to the eukaryotic ribosomal protein eS1 family.</text>
</comment>
<gene>
    <name evidence="1" type="primary">RPS1</name>
    <name type="ordered locus">KLTH0D16214g</name>
</gene>
<accession>C5DFM0</accession>
<name>RS3A_LACTC</name>
<proteinExistence type="inferred from homology"/>